<feature type="chain" id="PRO_0000266796" description="Small ribosomal subunit protein bS21">
    <location>
        <begin position="1"/>
        <end position="71"/>
    </location>
</feature>
<feature type="region of interest" description="Disordered" evidence="2">
    <location>
        <begin position="38"/>
        <end position="71"/>
    </location>
</feature>
<feature type="compositionally biased region" description="Basic residues" evidence="2">
    <location>
        <begin position="43"/>
        <end position="59"/>
    </location>
</feature>
<feature type="compositionally biased region" description="Basic and acidic residues" evidence="2">
    <location>
        <begin position="60"/>
        <end position="71"/>
    </location>
</feature>
<name>RS21_ALIF1</name>
<dbReference type="EMBL" id="CP000020">
    <property type="protein sequence ID" value="AAW86745.1"/>
    <property type="molecule type" value="Genomic_DNA"/>
</dbReference>
<dbReference type="RefSeq" id="WP_005421025.1">
    <property type="nucleotide sequence ID" value="NZ_CAWLES010000001.1"/>
</dbReference>
<dbReference type="RefSeq" id="YP_205633.1">
    <property type="nucleotide sequence ID" value="NC_006840.2"/>
</dbReference>
<dbReference type="SMR" id="Q5E2K1"/>
<dbReference type="STRING" id="312309.VF_2250"/>
<dbReference type="EnsemblBacteria" id="AAW86745">
    <property type="protein sequence ID" value="AAW86745"/>
    <property type="gene ID" value="VF_2250"/>
</dbReference>
<dbReference type="GeneID" id="77306663"/>
<dbReference type="KEGG" id="vfi:VF_2250"/>
<dbReference type="PATRIC" id="fig|312309.11.peg.2288"/>
<dbReference type="eggNOG" id="COG0828">
    <property type="taxonomic scope" value="Bacteria"/>
</dbReference>
<dbReference type="HOGENOM" id="CLU_159258_1_0_6"/>
<dbReference type="OrthoDB" id="9799244at2"/>
<dbReference type="PRO" id="PR:Q5E2K1"/>
<dbReference type="Proteomes" id="UP000000537">
    <property type="component" value="Chromosome I"/>
</dbReference>
<dbReference type="GO" id="GO:1990904">
    <property type="term" value="C:ribonucleoprotein complex"/>
    <property type="evidence" value="ECO:0007669"/>
    <property type="project" value="UniProtKB-KW"/>
</dbReference>
<dbReference type="GO" id="GO:0005840">
    <property type="term" value="C:ribosome"/>
    <property type="evidence" value="ECO:0007669"/>
    <property type="project" value="UniProtKB-KW"/>
</dbReference>
<dbReference type="GO" id="GO:0003735">
    <property type="term" value="F:structural constituent of ribosome"/>
    <property type="evidence" value="ECO:0007669"/>
    <property type="project" value="InterPro"/>
</dbReference>
<dbReference type="GO" id="GO:0006412">
    <property type="term" value="P:translation"/>
    <property type="evidence" value="ECO:0007669"/>
    <property type="project" value="UniProtKB-UniRule"/>
</dbReference>
<dbReference type="FunFam" id="1.20.5.1150:FF:000001">
    <property type="entry name" value="30S ribosomal protein S21"/>
    <property type="match status" value="1"/>
</dbReference>
<dbReference type="Gene3D" id="1.20.5.1150">
    <property type="entry name" value="Ribosomal protein S8"/>
    <property type="match status" value="1"/>
</dbReference>
<dbReference type="HAMAP" id="MF_00358">
    <property type="entry name" value="Ribosomal_bS21"/>
    <property type="match status" value="1"/>
</dbReference>
<dbReference type="InterPro" id="IPR001911">
    <property type="entry name" value="Ribosomal_bS21"/>
</dbReference>
<dbReference type="InterPro" id="IPR018278">
    <property type="entry name" value="Ribosomal_bS21_CS"/>
</dbReference>
<dbReference type="InterPro" id="IPR038380">
    <property type="entry name" value="Ribosomal_bS21_sf"/>
</dbReference>
<dbReference type="NCBIfam" id="TIGR00030">
    <property type="entry name" value="S21p"/>
    <property type="match status" value="1"/>
</dbReference>
<dbReference type="PANTHER" id="PTHR21109">
    <property type="entry name" value="MITOCHONDRIAL 28S RIBOSOMAL PROTEIN S21"/>
    <property type="match status" value="1"/>
</dbReference>
<dbReference type="PANTHER" id="PTHR21109:SF22">
    <property type="entry name" value="SMALL RIBOSOMAL SUBUNIT PROTEIN BS21"/>
    <property type="match status" value="1"/>
</dbReference>
<dbReference type="Pfam" id="PF01165">
    <property type="entry name" value="Ribosomal_S21"/>
    <property type="match status" value="1"/>
</dbReference>
<dbReference type="PRINTS" id="PR00976">
    <property type="entry name" value="RIBOSOMALS21"/>
</dbReference>
<dbReference type="PROSITE" id="PS01181">
    <property type="entry name" value="RIBOSOMAL_S21"/>
    <property type="match status" value="1"/>
</dbReference>
<evidence type="ECO:0000255" key="1">
    <source>
        <dbReference type="HAMAP-Rule" id="MF_00358"/>
    </source>
</evidence>
<evidence type="ECO:0000256" key="2">
    <source>
        <dbReference type="SAM" id="MobiDB-lite"/>
    </source>
</evidence>
<evidence type="ECO:0000305" key="3"/>
<gene>
    <name evidence="1" type="primary">rpsU</name>
    <name type="ordered locus">VF_2250</name>
</gene>
<proteinExistence type="inferred from homology"/>
<sequence length="71" mass="8503">MPVVKVRENEPFDVALRRFKRSCEKAGILSEVRRREHYEKPTTVRKRAKAAAQKRHAKKLSRENARRVRLY</sequence>
<protein>
    <recommendedName>
        <fullName evidence="1">Small ribosomal subunit protein bS21</fullName>
    </recommendedName>
    <alternativeName>
        <fullName evidence="3">30S ribosomal protein S21</fullName>
    </alternativeName>
</protein>
<reference key="1">
    <citation type="journal article" date="2005" name="Proc. Natl. Acad. Sci. U.S.A.">
        <title>Complete genome sequence of Vibrio fischeri: a symbiotic bacterium with pathogenic congeners.</title>
        <authorList>
            <person name="Ruby E.G."/>
            <person name="Urbanowski M."/>
            <person name="Campbell J."/>
            <person name="Dunn A."/>
            <person name="Faini M."/>
            <person name="Gunsalus R."/>
            <person name="Lostroh P."/>
            <person name="Lupp C."/>
            <person name="McCann J."/>
            <person name="Millikan D."/>
            <person name="Schaefer A."/>
            <person name="Stabb E."/>
            <person name="Stevens A."/>
            <person name="Visick K."/>
            <person name="Whistler C."/>
            <person name="Greenberg E.P."/>
        </authorList>
    </citation>
    <scope>NUCLEOTIDE SEQUENCE [LARGE SCALE GENOMIC DNA]</scope>
    <source>
        <strain>ATCC 700601 / ES114</strain>
    </source>
</reference>
<comment type="similarity">
    <text evidence="1">Belongs to the bacterial ribosomal protein bS21 family.</text>
</comment>
<organism>
    <name type="scientific">Aliivibrio fischeri (strain ATCC 700601 / ES114)</name>
    <name type="common">Vibrio fischeri</name>
    <dbReference type="NCBI Taxonomy" id="312309"/>
    <lineage>
        <taxon>Bacteria</taxon>
        <taxon>Pseudomonadati</taxon>
        <taxon>Pseudomonadota</taxon>
        <taxon>Gammaproteobacteria</taxon>
        <taxon>Vibrionales</taxon>
        <taxon>Vibrionaceae</taxon>
        <taxon>Aliivibrio</taxon>
    </lineage>
</organism>
<keyword id="KW-1185">Reference proteome</keyword>
<keyword id="KW-0687">Ribonucleoprotein</keyword>
<keyword id="KW-0689">Ribosomal protein</keyword>
<accession>Q5E2K1</accession>